<gene>
    <name evidence="1" type="primary">cobS</name>
    <name type="ordered locus">FN0912</name>
</gene>
<organism>
    <name type="scientific">Fusobacterium nucleatum subsp. nucleatum (strain ATCC 25586 / DSM 15643 / BCRC 10681 / CIP 101130 / JCM 8532 / KCTC 2640 / LMG 13131 / VPI 4355)</name>
    <dbReference type="NCBI Taxonomy" id="190304"/>
    <lineage>
        <taxon>Bacteria</taxon>
        <taxon>Fusobacteriati</taxon>
        <taxon>Fusobacteriota</taxon>
        <taxon>Fusobacteriia</taxon>
        <taxon>Fusobacteriales</taxon>
        <taxon>Fusobacteriaceae</taxon>
        <taxon>Fusobacterium</taxon>
    </lineage>
</organism>
<name>COBS_FUSNN</name>
<keyword id="KW-0997">Cell inner membrane</keyword>
<keyword id="KW-1003">Cell membrane</keyword>
<keyword id="KW-0169">Cobalamin biosynthesis</keyword>
<keyword id="KW-0460">Magnesium</keyword>
<keyword id="KW-0472">Membrane</keyword>
<keyword id="KW-1185">Reference proteome</keyword>
<keyword id="KW-0808">Transferase</keyword>
<keyword id="KW-0812">Transmembrane</keyword>
<keyword id="KW-1133">Transmembrane helix</keyword>
<accession>Q8R666</accession>
<comment type="function">
    <text evidence="1">Joins adenosylcobinamide-GDP and alpha-ribazole to generate adenosylcobalamin (Ado-cobalamin). Also synthesizes adenosylcobalamin 5'-phosphate from adenosylcobinamide-GDP and alpha-ribazole 5'-phosphate.</text>
</comment>
<comment type="catalytic activity">
    <reaction evidence="1">
        <text>alpha-ribazole + adenosylcob(III)inamide-GDP = adenosylcob(III)alamin + GMP + H(+)</text>
        <dbReference type="Rhea" id="RHEA:16049"/>
        <dbReference type="ChEBI" id="CHEBI:10329"/>
        <dbReference type="ChEBI" id="CHEBI:15378"/>
        <dbReference type="ChEBI" id="CHEBI:18408"/>
        <dbReference type="ChEBI" id="CHEBI:58115"/>
        <dbReference type="ChEBI" id="CHEBI:60487"/>
        <dbReference type="EC" id="2.7.8.26"/>
    </reaction>
</comment>
<comment type="catalytic activity">
    <reaction evidence="1">
        <text>alpha-ribazole 5'-phosphate + adenosylcob(III)inamide-GDP = adenosylcob(III)alamin 5'-phosphate + GMP + H(+)</text>
        <dbReference type="Rhea" id="RHEA:23560"/>
        <dbReference type="ChEBI" id="CHEBI:15378"/>
        <dbReference type="ChEBI" id="CHEBI:57918"/>
        <dbReference type="ChEBI" id="CHEBI:58115"/>
        <dbReference type="ChEBI" id="CHEBI:60487"/>
        <dbReference type="ChEBI" id="CHEBI:60493"/>
        <dbReference type="EC" id="2.7.8.26"/>
    </reaction>
</comment>
<comment type="cofactor">
    <cofactor evidence="1">
        <name>Mg(2+)</name>
        <dbReference type="ChEBI" id="CHEBI:18420"/>
    </cofactor>
</comment>
<comment type="pathway">
    <text evidence="1">Cofactor biosynthesis; adenosylcobalamin biosynthesis; adenosylcobalamin from cob(II)yrinate a,c-diamide: step 7/7.</text>
</comment>
<comment type="subcellular location">
    <subcellularLocation>
        <location evidence="1">Cell inner membrane</location>
        <topology evidence="1">Multi-pass membrane protein</topology>
    </subcellularLocation>
</comment>
<comment type="similarity">
    <text evidence="1">Belongs to the CobS family.</text>
</comment>
<evidence type="ECO:0000255" key="1">
    <source>
        <dbReference type="HAMAP-Rule" id="MF_00719"/>
    </source>
</evidence>
<sequence length="278" mass="30922">MKGFLLLLSFMTRIPMPKTDYDEEKLGKSMKYFPVVGIIVGFILLFFCIIFNFILKNISYSAVLPLMIIVVILTDLITTGALHLDGLADTFDGIFSYRSKHKMLEIMKDSRLGSNGALALILYFLLKFILLFSLTIESREAAVYAIITYPVVSRFCSVVSCASSPYARGSGMGKTFVDNIKTCGLIVATVITLLYTIGMLFMPFILFTNYSLPMQFMIRSVLIIVIIVGLLALFAFAFSKLIERKIGGITGDTLGALLEISSLVYIFLFLVIPTFFIG</sequence>
<dbReference type="EC" id="2.7.8.26" evidence="1"/>
<dbReference type="EMBL" id="AE009951">
    <property type="protein sequence ID" value="AAL95108.1"/>
    <property type="molecule type" value="Genomic_DNA"/>
</dbReference>
<dbReference type="RefSeq" id="NP_603809.1">
    <property type="nucleotide sequence ID" value="NC_003454.1"/>
</dbReference>
<dbReference type="RefSeq" id="WP_011016745.1">
    <property type="nucleotide sequence ID" value="NZ_CP028101.1"/>
</dbReference>
<dbReference type="STRING" id="190304.FN0912"/>
<dbReference type="PaxDb" id="190304-FN0912"/>
<dbReference type="EnsemblBacteria" id="AAL95108">
    <property type="protein sequence ID" value="AAL95108"/>
    <property type="gene ID" value="FN0912"/>
</dbReference>
<dbReference type="GeneID" id="79783895"/>
<dbReference type="KEGG" id="fnu:FN0912"/>
<dbReference type="PATRIC" id="fig|190304.8.peg.1475"/>
<dbReference type="eggNOG" id="COG0368">
    <property type="taxonomic scope" value="Bacteria"/>
</dbReference>
<dbReference type="HOGENOM" id="CLU_057426_1_2_0"/>
<dbReference type="InParanoid" id="Q8R666"/>
<dbReference type="BioCyc" id="FNUC190304:G1FZS-1494-MONOMER"/>
<dbReference type="UniPathway" id="UPA00148">
    <property type="reaction ID" value="UER00238"/>
</dbReference>
<dbReference type="Proteomes" id="UP000002521">
    <property type="component" value="Chromosome"/>
</dbReference>
<dbReference type="GO" id="GO:0005886">
    <property type="term" value="C:plasma membrane"/>
    <property type="evidence" value="ECO:0007669"/>
    <property type="project" value="UniProtKB-SubCell"/>
</dbReference>
<dbReference type="GO" id="GO:0051073">
    <property type="term" value="F:adenosylcobinamide-GDP ribazoletransferase activity"/>
    <property type="evidence" value="ECO:0007669"/>
    <property type="project" value="UniProtKB-UniRule"/>
</dbReference>
<dbReference type="GO" id="GO:0008818">
    <property type="term" value="F:cobalamin 5'-phosphate synthase activity"/>
    <property type="evidence" value="ECO:0007669"/>
    <property type="project" value="UniProtKB-UniRule"/>
</dbReference>
<dbReference type="GO" id="GO:0009236">
    <property type="term" value="P:cobalamin biosynthetic process"/>
    <property type="evidence" value="ECO:0000318"/>
    <property type="project" value="GO_Central"/>
</dbReference>
<dbReference type="HAMAP" id="MF_00719">
    <property type="entry name" value="CobS"/>
    <property type="match status" value="1"/>
</dbReference>
<dbReference type="InterPro" id="IPR003805">
    <property type="entry name" value="CobS"/>
</dbReference>
<dbReference type="NCBIfam" id="TIGR00317">
    <property type="entry name" value="cobS"/>
    <property type="match status" value="1"/>
</dbReference>
<dbReference type="PANTHER" id="PTHR34148">
    <property type="entry name" value="ADENOSYLCOBINAMIDE-GDP RIBAZOLETRANSFERASE"/>
    <property type="match status" value="1"/>
</dbReference>
<dbReference type="PANTHER" id="PTHR34148:SF1">
    <property type="entry name" value="ADENOSYLCOBINAMIDE-GDP RIBAZOLETRANSFERASE"/>
    <property type="match status" value="1"/>
</dbReference>
<dbReference type="Pfam" id="PF02654">
    <property type="entry name" value="CobS"/>
    <property type="match status" value="1"/>
</dbReference>
<protein>
    <recommendedName>
        <fullName evidence="1">Adenosylcobinamide-GDP ribazoletransferase</fullName>
        <ecNumber evidence="1">2.7.8.26</ecNumber>
    </recommendedName>
    <alternativeName>
        <fullName evidence="1">Cobalamin synthase</fullName>
    </alternativeName>
    <alternativeName>
        <fullName evidence="1">Cobalamin-5'-phosphate synthase</fullName>
    </alternativeName>
</protein>
<reference key="1">
    <citation type="journal article" date="2002" name="J. Bacteriol.">
        <title>Genome sequence and analysis of the oral bacterium Fusobacterium nucleatum strain ATCC 25586.</title>
        <authorList>
            <person name="Kapatral V."/>
            <person name="Anderson I."/>
            <person name="Ivanova N."/>
            <person name="Reznik G."/>
            <person name="Los T."/>
            <person name="Lykidis A."/>
            <person name="Bhattacharyya A."/>
            <person name="Bartman A."/>
            <person name="Gardner W."/>
            <person name="Grechkin G."/>
            <person name="Zhu L."/>
            <person name="Vasieva O."/>
            <person name="Chu L."/>
            <person name="Kogan Y."/>
            <person name="Chaga O."/>
            <person name="Goltsman E."/>
            <person name="Bernal A."/>
            <person name="Larsen N."/>
            <person name="D'Souza M."/>
            <person name="Walunas T."/>
            <person name="Pusch G."/>
            <person name="Haselkorn R."/>
            <person name="Fonstein M."/>
            <person name="Kyrpides N.C."/>
            <person name="Overbeek R."/>
        </authorList>
    </citation>
    <scope>NUCLEOTIDE SEQUENCE [LARGE SCALE GENOMIC DNA]</scope>
    <source>
        <strain>ATCC 25586 / DSM 15643 / BCRC 10681 / CIP 101130 / JCM 8532 / KCTC 2640 / LMG 13131 / VPI 4355</strain>
    </source>
</reference>
<feature type="chain" id="PRO_0000146879" description="Adenosylcobinamide-GDP ribazoletransferase">
    <location>
        <begin position="1"/>
        <end position="278"/>
    </location>
</feature>
<feature type="transmembrane region" description="Helical" evidence="1">
    <location>
        <begin position="35"/>
        <end position="55"/>
    </location>
</feature>
<feature type="transmembrane region" description="Helical" evidence="1">
    <location>
        <begin position="62"/>
        <end position="82"/>
    </location>
</feature>
<feature type="transmembrane region" description="Helical" evidence="1">
    <location>
        <begin position="116"/>
        <end position="136"/>
    </location>
</feature>
<feature type="transmembrane region" description="Helical" evidence="1">
    <location>
        <begin position="141"/>
        <end position="161"/>
    </location>
</feature>
<feature type="transmembrane region" description="Helical" evidence="1">
    <location>
        <begin position="185"/>
        <end position="205"/>
    </location>
</feature>
<feature type="transmembrane region" description="Helical" evidence="1">
    <location>
        <begin position="222"/>
        <end position="242"/>
    </location>
</feature>
<feature type="transmembrane region" description="Helical" evidence="1">
    <location>
        <begin position="257"/>
        <end position="277"/>
    </location>
</feature>
<proteinExistence type="inferred from homology"/>